<organism>
    <name type="scientific">Cytophaga hutchinsonii (strain ATCC 33406 / DSM 1761 / CIP 103989 / NBRC 15051 / NCIMB 9469 / D465)</name>
    <dbReference type="NCBI Taxonomy" id="269798"/>
    <lineage>
        <taxon>Bacteria</taxon>
        <taxon>Pseudomonadati</taxon>
        <taxon>Bacteroidota</taxon>
        <taxon>Cytophagia</taxon>
        <taxon>Cytophagales</taxon>
        <taxon>Cytophagaceae</taxon>
        <taxon>Cytophaga</taxon>
    </lineage>
</organism>
<comment type="function">
    <text evidence="1">Catalyzes the rearrangement of 1-deoxy-D-xylulose 5-phosphate (DXP) to produce the thiazole phosphate moiety of thiamine. Sulfur is provided by the thiocarboxylate moiety of the carrier protein ThiS. In vitro, sulfur can be provided by H(2)S.</text>
</comment>
<comment type="catalytic activity">
    <reaction evidence="1">
        <text>[ThiS sulfur-carrier protein]-C-terminal-Gly-aminoethanethioate + 2-iminoacetate + 1-deoxy-D-xylulose 5-phosphate = [ThiS sulfur-carrier protein]-C-terminal Gly-Gly + 2-[(2R,5Z)-2-carboxy-4-methylthiazol-5(2H)-ylidene]ethyl phosphate + 2 H2O + H(+)</text>
        <dbReference type="Rhea" id="RHEA:26297"/>
        <dbReference type="Rhea" id="RHEA-COMP:12909"/>
        <dbReference type="Rhea" id="RHEA-COMP:19908"/>
        <dbReference type="ChEBI" id="CHEBI:15377"/>
        <dbReference type="ChEBI" id="CHEBI:15378"/>
        <dbReference type="ChEBI" id="CHEBI:57792"/>
        <dbReference type="ChEBI" id="CHEBI:62899"/>
        <dbReference type="ChEBI" id="CHEBI:77846"/>
        <dbReference type="ChEBI" id="CHEBI:90778"/>
        <dbReference type="ChEBI" id="CHEBI:232372"/>
        <dbReference type="EC" id="2.8.1.10"/>
    </reaction>
</comment>
<comment type="pathway">
    <text evidence="1">Cofactor biosynthesis; thiamine diphosphate biosynthesis.</text>
</comment>
<comment type="subunit">
    <text evidence="1">Homotetramer. Forms heterodimers with either ThiH or ThiS.</text>
</comment>
<comment type="subcellular location">
    <subcellularLocation>
        <location evidence="1">Cytoplasm</location>
    </subcellularLocation>
</comment>
<comment type="similarity">
    <text evidence="1">Belongs to the ThiG family.</text>
</comment>
<gene>
    <name evidence="1" type="primary">thiG</name>
    <name type="ordered locus">CHU_0243</name>
</gene>
<feature type="chain" id="PRO_1000072335" description="Thiazole synthase">
    <location>
        <begin position="1"/>
        <end position="258"/>
    </location>
</feature>
<feature type="active site" description="Schiff-base intermediate with DXP" evidence="1">
    <location>
        <position position="98"/>
    </location>
</feature>
<feature type="binding site" evidence="1">
    <location>
        <position position="159"/>
    </location>
    <ligand>
        <name>1-deoxy-D-xylulose 5-phosphate</name>
        <dbReference type="ChEBI" id="CHEBI:57792"/>
    </ligand>
</feature>
<feature type="binding site" evidence="1">
    <location>
        <begin position="185"/>
        <end position="186"/>
    </location>
    <ligand>
        <name>1-deoxy-D-xylulose 5-phosphate</name>
        <dbReference type="ChEBI" id="CHEBI:57792"/>
    </ligand>
</feature>
<feature type="binding site" evidence="1">
    <location>
        <begin position="207"/>
        <end position="208"/>
    </location>
    <ligand>
        <name>1-deoxy-D-xylulose 5-phosphate</name>
        <dbReference type="ChEBI" id="CHEBI:57792"/>
    </ligand>
</feature>
<protein>
    <recommendedName>
        <fullName evidence="1">Thiazole synthase</fullName>
        <ecNumber evidence="1">2.8.1.10</ecNumber>
    </recommendedName>
</protein>
<keyword id="KW-0963">Cytoplasm</keyword>
<keyword id="KW-1185">Reference proteome</keyword>
<keyword id="KW-0704">Schiff base</keyword>
<keyword id="KW-0784">Thiamine biosynthesis</keyword>
<keyword id="KW-0808">Transferase</keyword>
<accession>Q11YI1</accession>
<name>THIG_CYTH3</name>
<proteinExistence type="inferred from homology"/>
<evidence type="ECO:0000255" key="1">
    <source>
        <dbReference type="HAMAP-Rule" id="MF_00443"/>
    </source>
</evidence>
<reference key="1">
    <citation type="journal article" date="2007" name="Appl. Environ. Microbiol.">
        <title>Genome sequence of the cellulolytic gliding bacterium Cytophaga hutchinsonii.</title>
        <authorList>
            <person name="Xie G."/>
            <person name="Bruce D.C."/>
            <person name="Challacombe J.F."/>
            <person name="Chertkov O."/>
            <person name="Detter J.C."/>
            <person name="Gilna P."/>
            <person name="Han C.S."/>
            <person name="Lucas S."/>
            <person name="Misra M."/>
            <person name="Myers G.L."/>
            <person name="Richardson P."/>
            <person name="Tapia R."/>
            <person name="Thayer N."/>
            <person name="Thompson L.S."/>
            <person name="Brettin T.S."/>
            <person name="Henrissat B."/>
            <person name="Wilson D.B."/>
            <person name="McBride M.J."/>
        </authorList>
    </citation>
    <scope>NUCLEOTIDE SEQUENCE [LARGE SCALE GENOMIC DNA]</scope>
    <source>
        <strain>ATCC 33406 / DSM 1761 / JCM 20678 / CIP 103989 / IAM 12607 / NBRC 15051 / NCIMB 9469 / D465</strain>
    </source>
</reference>
<dbReference type="EC" id="2.8.1.10" evidence="1"/>
<dbReference type="EMBL" id="CP000383">
    <property type="protein sequence ID" value="ABG57535.1"/>
    <property type="molecule type" value="Genomic_DNA"/>
</dbReference>
<dbReference type="RefSeq" id="WP_011583651.1">
    <property type="nucleotide sequence ID" value="NC_008255.1"/>
</dbReference>
<dbReference type="SMR" id="Q11YI1"/>
<dbReference type="STRING" id="269798.CHU_0243"/>
<dbReference type="KEGG" id="chu:CHU_0243"/>
<dbReference type="eggNOG" id="COG2022">
    <property type="taxonomic scope" value="Bacteria"/>
</dbReference>
<dbReference type="HOGENOM" id="CLU_062233_1_0_10"/>
<dbReference type="OrthoDB" id="9805935at2"/>
<dbReference type="UniPathway" id="UPA00060"/>
<dbReference type="Proteomes" id="UP000001822">
    <property type="component" value="Chromosome"/>
</dbReference>
<dbReference type="GO" id="GO:0005737">
    <property type="term" value="C:cytoplasm"/>
    <property type="evidence" value="ECO:0007669"/>
    <property type="project" value="UniProtKB-SubCell"/>
</dbReference>
<dbReference type="GO" id="GO:1990107">
    <property type="term" value="F:thiazole synthase activity"/>
    <property type="evidence" value="ECO:0007669"/>
    <property type="project" value="UniProtKB-EC"/>
</dbReference>
<dbReference type="GO" id="GO:0009229">
    <property type="term" value="P:thiamine diphosphate biosynthetic process"/>
    <property type="evidence" value="ECO:0007669"/>
    <property type="project" value="UniProtKB-UniRule"/>
</dbReference>
<dbReference type="CDD" id="cd04728">
    <property type="entry name" value="ThiG"/>
    <property type="match status" value="1"/>
</dbReference>
<dbReference type="FunFam" id="3.20.20.70:FF:000049">
    <property type="entry name" value="Thiazole synthase"/>
    <property type="match status" value="1"/>
</dbReference>
<dbReference type="Gene3D" id="3.20.20.70">
    <property type="entry name" value="Aldolase class I"/>
    <property type="match status" value="1"/>
</dbReference>
<dbReference type="HAMAP" id="MF_00443">
    <property type="entry name" value="ThiG"/>
    <property type="match status" value="1"/>
</dbReference>
<dbReference type="InterPro" id="IPR013785">
    <property type="entry name" value="Aldolase_TIM"/>
</dbReference>
<dbReference type="InterPro" id="IPR033983">
    <property type="entry name" value="Thiazole_synthase_ThiG"/>
</dbReference>
<dbReference type="InterPro" id="IPR008867">
    <property type="entry name" value="ThiG"/>
</dbReference>
<dbReference type="PANTHER" id="PTHR34266">
    <property type="entry name" value="THIAZOLE SYNTHASE"/>
    <property type="match status" value="1"/>
</dbReference>
<dbReference type="PANTHER" id="PTHR34266:SF2">
    <property type="entry name" value="THIAZOLE SYNTHASE"/>
    <property type="match status" value="1"/>
</dbReference>
<dbReference type="Pfam" id="PF05690">
    <property type="entry name" value="ThiG"/>
    <property type="match status" value="1"/>
</dbReference>
<dbReference type="SUPFAM" id="SSF110399">
    <property type="entry name" value="ThiG-like"/>
    <property type="match status" value="1"/>
</dbReference>
<sequence>MSDQLKIADKTFTSRLFTGTGKFATGEEMFHALQASGSELVTVALRRIDIDGQEDDILKWLKKGNFNLLPNTSGARNAKEAVFAATLAREALGTNWLKLEIHPDPKYLMPDPIETLKAAEELVKAGFVVLPYIHADPVLCKRLEEVGCAAVMPLGSPIGSNKGLRTRDFLEIIIEQSNVPVIVDAGIGAPSQAAEAMELGAAAVLVNTAMAVAGDTKAMGKAFGMAVEAGRMAHLAKLAPVSNAAHASSPLLSFLNDL</sequence>